<name>SHR1_ORYSJ</name>
<keyword id="KW-0217">Developmental protein</keyword>
<keyword id="KW-0539">Nucleus</keyword>
<keyword id="KW-1185">Reference proteome</keyword>
<keyword id="KW-0804">Transcription</keyword>
<keyword id="KW-0805">Transcription regulation</keyword>
<protein>
    <recommendedName>
        <fullName evidence="8">Protein SHORT-ROOT 1</fullName>
        <shortName evidence="8">OsSHR1</shortName>
    </recommendedName>
    <alternativeName>
        <fullName evidence="7">GRAS family protein 38</fullName>
        <shortName evidence="7">OsGRAS-38</shortName>
    </alternativeName>
</protein>
<accession>Q8H2X8</accession>
<accession>A0A0P0X8C3</accession>
<accession>A3BLN3</accession>
<accession>B7F6J7</accession>
<accession>B9FY58</accession>
<accession>Q0D526</accession>
<proteinExistence type="evidence at protein level"/>
<organism>
    <name type="scientific">Oryza sativa subsp. japonica</name>
    <name type="common">Rice</name>
    <dbReference type="NCBI Taxonomy" id="39947"/>
    <lineage>
        <taxon>Eukaryota</taxon>
        <taxon>Viridiplantae</taxon>
        <taxon>Streptophyta</taxon>
        <taxon>Embryophyta</taxon>
        <taxon>Tracheophyta</taxon>
        <taxon>Spermatophyta</taxon>
        <taxon>Magnoliopsida</taxon>
        <taxon>Liliopsida</taxon>
        <taxon>Poales</taxon>
        <taxon>Poaceae</taxon>
        <taxon>BOP clade</taxon>
        <taxon>Oryzoideae</taxon>
        <taxon>Oryzeae</taxon>
        <taxon>Oryzinae</taxon>
        <taxon>Oryza</taxon>
        <taxon>Oryza sativa</taxon>
    </lineage>
</organism>
<evidence type="ECO:0000250" key="1"/>
<evidence type="ECO:0000255" key="2">
    <source>
        <dbReference type="PROSITE-ProRule" id="PRU01191"/>
    </source>
</evidence>
<evidence type="ECO:0000256" key="3">
    <source>
        <dbReference type="SAM" id="MobiDB-lite"/>
    </source>
</evidence>
<evidence type="ECO:0000269" key="4">
    <source>
    </source>
</evidence>
<evidence type="ECO:0000269" key="5">
    <source>
    </source>
</evidence>
<evidence type="ECO:0000269" key="6">
    <source>
    </source>
</evidence>
<evidence type="ECO:0000303" key="7">
    <source>
    </source>
</evidence>
<evidence type="ECO:0000303" key="8">
    <source>
    </source>
</evidence>
<evidence type="ECO:0000305" key="9"/>
<evidence type="ECO:0000312" key="10">
    <source>
        <dbReference type="EMBL" id="BAC20900.1"/>
    </source>
</evidence>
<evidence type="ECO:0000312" key="11">
    <source>
        <dbReference type="EMBL" id="BAD30442.1"/>
    </source>
</evidence>
<evidence type="ECO:0000312" key="12">
    <source>
        <dbReference type="EMBL" id="BAT02401.1"/>
    </source>
</evidence>
<evidence type="ECO:0000312" key="13">
    <source>
        <dbReference type="EMBL" id="EEE67495.1"/>
    </source>
</evidence>
<sequence>MDTLFRLVSLQAASEQQQQQQQSASYNSRSTTSSGSRSSSHQTNASYSYYHHSSNSGGGGGGGGGYYYGGQQPPPSQYYYLEPYQEECGNAPHHQLYMDEDFSSSSSSRHFHHGARVQQQQPPASSTPTGTAPTPPLSTSSTAAGAGHGLFEAADLSFPPDLNLDFSSPASSSGGGTASSGAVGGGGGGRWASQLLLECARSVAARDSQRVQQLMWMLNELASPYGDVEQKLASYFLQGLFARLTASGPRTLRTLAAASDRNTSFDSTRRTALRFQELSPWSSFGHVAANGAILESFLEVAAAASSETQRFHILDLSNTFCTQWPTLLEALATRSADETPHLSITTVVSAAPSAPTAAVQRVMREIGQRMEKFARLMGVPFRFRAVHHSGDLAELDLDALDLREGGATTALAVNCVNSLRGVVPGRARRRDAFAASLRRLDPRVVTVVEEEADLVASDPDASSATEEGGDTEAAFLKVFGEGLRFFSAYMDSLEESFPKTSNERLALERGAGRAIVDLVSCPASESMERRETAASWARRMRSAGFSPVAFSEDVADDVRSLLRRYREGWSMREAGTDDSAAGAGVFLAWKEQPLVWASAWRP</sequence>
<gene>
    <name evidence="8" type="primary">SHR1</name>
    <name evidence="12" type="ordered locus">Os07g0586900</name>
    <name evidence="9" type="ordered locus">LOC_Os07g39820</name>
    <name evidence="11" type="ORF">OJ1047_C01.1</name>
    <name evidence="10" type="ORF">OJ1113_E01.116</name>
    <name evidence="13" type="ORF">OsJ_24926</name>
</gene>
<comment type="function">
    <text evidence="5">Transcription factor required for the asymmetric cell division involved in radial pattern formation in roots. Essential for both cell division and cell specification.</text>
</comment>
<comment type="subunit">
    <text evidence="5 6">Interacts with SCR1 (PubMed:17446396). Interacts with SMOS1 (PubMed:28069545).</text>
</comment>
<comment type="subcellular location">
    <subcellularLocation>
        <location evidence="1">Nucleus</location>
    </subcellularLocation>
</comment>
<comment type="tissue specificity">
    <text evidence="4 5">Expressed in leaves and roots. Detected in the stele, the endodermis and part of the cortex.</text>
</comment>
<comment type="developmental stage">
    <text evidence="4">In P3 leaf primordium, expressed ubiquitously in the L1 layer and in the inner cells at lower levels. Not limited to the developing stomata until the last cell divisions.</text>
</comment>
<comment type="similarity">
    <text evidence="9">Belongs to the GRAS family.</text>
</comment>
<comment type="sequence caution" evidence="9">
    <conflict type="erroneous gene model prediction">
        <sequence resource="EMBL-CDS" id="BAC20900"/>
    </conflict>
</comment>
<comment type="sequence caution" evidence="9">
    <conflict type="erroneous gene model prediction">
        <sequence resource="EMBL-CDS" id="BAD30442"/>
    </conflict>
</comment>
<comment type="sequence caution" evidence="9">
    <conflict type="erroneous gene model prediction">
        <sequence resource="EMBL-CDS" id="EEE67495"/>
    </conflict>
</comment>
<dbReference type="EMBL" id="AP003985">
    <property type="protein sequence ID" value="BAD30442.1"/>
    <property type="status" value="ALT_SEQ"/>
    <property type="molecule type" value="Genomic_DNA"/>
</dbReference>
<dbReference type="EMBL" id="AP005437">
    <property type="protein sequence ID" value="BAC20900.1"/>
    <property type="status" value="ALT_SEQ"/>
    <property type="molecule type" value="Genomic_DNA"/>
</dbReference>
<dbReference type="EMBL" id="AP008213">
    <property type="protein sequence ID" value="BAF22047.1"/>
    <property type="molecule type" value="Genomic_DNA"/>
</dbReference>
<dbReference type="EMBL" id="AP014963">
    <property type="protein sequence ID" value="BAT02401.1"/>
    <property type="molecule type" value="Genomic_DNA"/>
</dbReference>
<dbReference type="EMBL" id="CM000144">
    <property type="protein sequence ID" value="EEE67495.1"/>
    <property type="status" value="ALT_SEQ"/>
    <property type="molecule type" value="Genomic_DNA"/>
</dbReference>
<dbReference type="EMBL" id="AK120959">
    <property type="protein sequence ID" value="BAH00245.1"/>
    <property type="molecule type" value="mRNA"/>
</dbReference>
<dbReference type="RefSeq" id="XP_015645491.1">
    <property type="nucleotide sequence ID" value="XM_015790005.1"/>
</dbReference>
<dbReference type="SMR" id="Q8H2X8"/>
<dbReference type="BioGRID" id="812790">
    <property type="interactions" value="3"/>
</dbReference>
<dbReference type="FunCoup" id="Q8H2X8">
    <property type="interactions" value="1475"/>
</dbReference>
<dbReference type="IntAct" id="Q8H2X8">
    <property type="interactions" value="2"/>
</dbReference>
<dbReference type="STRING" id="39947.Q8H2X8"/>
<dbReference type="PaxDb" id="39947-Q8H2X8"/>
<dbReference type="EnsemblPlants" id="Os07t0586900-01">
    <property type="protein sequence ID" value="Os07t0586900-01"/>
    <property type="gene ID" value="Os07g0586900"/>
</dbReference>
<dbReference type="Gramene" id="Os07t0586900-01">
    <property type="protein sequence ID" value="Os07t0586900-01"/>
    <property type="gene ID" value="Os07g0586900"/>
</dbReference>
<dbReference type="KEGG" id="dosa:Os07g0586900"/>
<dbReference type="eggNOG" id="ENOG502QQN4">
    <property type="taxonomic scope" value="Eukaryota"/>
</dbReference>
<dbReference type="HOGENOM" id="CLU_011924_5_1_1"/>
<dbReference type="InParanoid" id="Q8H2X8"/>
<dbReference type="OMA" id="TDYSYSF"/>
<dbReference type="OrthoDB" id="1913536at2759"/>
<dbReference type="Proteomes" id="UP000000763">
    <property type="component" value="Chromosome 7"/>
</dbReference>
<dbReference type="Proteomes" id="UP000007752">
    <property type="component" value="Chromosome 7"/>
</dbReference>
<dbReference type="Proteomes" id="UP000059680">
    <property type="component" value="Chromosome 7"/>
</dbReference>
<dbReference type="GO" id="GO:0005634">
    <property type="term" value="C:nucleus"/>
    <property type="evidence" value="ECO:0000318"/>
    <property type="project" value="GO_Central"/>
</dbReference>
<dbReference type="GO" id="GO:0003700">
    <property type="term" value="F:DNA-binding transcription factor activity"/>
    <property type="evidence" value="ECO:0000318"/>
    <property type="project" value="GO_Central"/>
</dbReference>
<dbReference type="GO" id="GO:0043565">
    <property type="term" value="F:sequence-specific DNA binding"/>
    <property type="evidence" value="ECO:0000318"/>
    <property type="project" value="GO_Central"/>
</dbReference>
<dbReference type="GO" id="GO:0008356">
    <property type="term" value="P:asymmetric cell division"/>
    <property type="evidence" value="ECO:0000318"/>
    <property type="project" value="GO_Central"/>
</dbReference>
<dbReference type="GO" id="GO:0048366">
    <property type="term" value="P:leaf development"/>
    <property type="evidence" value="ECO:0000318"/>
    <property type="project" value="GO_Central"/>
</dbReference>
<dbReference type="GO" id="GO:0045930">
    <property type="term" value="P:negative regulation of mitotic cell cycle"/>
    <property type="evidence" value="ECO:0000318"/>
    <property type="project" value="GO_Central"/>
</dbReference>
<dbReference type="GO" id="GO:0009956">
    <property type="term" value="P:radial pattern formation"/>
    <property type="evidence" value="ECO:0000318"/>
    <property type="project" value="GO_Central"/>
</dbReference>
<dbReference type="GO" id="GO:0006355">
    <property type="term" value="P:regulation of DNA-templated transcription"/>
    <property type="evidence" value="ECO:0000318"/>
    <property type="project" value="GO_Central"/>
</dbReference>
<dbReference type="InterPro" id="IPR005202">
    <property type="entry name" value="TF_GRAS"/>
</dbReference>
<dbReference type="PANTHER" id="PTHR31636">
    <property type="entry name" value="OSJNBA0084A10.13 PROTEIN-RELATED"/>
    <property type="match status" value="1"/>
</dbReference>
<dbReference type="Pfam" id="PF03514">
    <property type="entry name" value="GRAS"/>
    <property type="match status" value="1"/>
</dbReference>
<dbReference type="PROSITE" id="PS50985">
    <property type="entry name" value="GRAS"/>
    <property type="match status" value="1"/>
</dbReference>
<reference key="1">
    <citation type="journal article" date="2005" name="Nature">
        <title>The map-based sequence of the rice genome.</title>
        <authorList>
            <consortium name="International rice genome sequencing project (IRGSP)"/>
        </authorList>
    </citation>
    <scope>NUCLEOTIDE SEQUENCE [LARGE SCALE GENOMIC DNA]</scope>
    <source>
        <strain>cv. Nipponbare</strain>
    </source>
</reference>
<reference key="2">
    <citation type="journal article" date="2008" name="Nucleic Acids Res.">
        <title>The rice annotation project database (RAP-DB): 2008 update.</title>
        <authorList>
            <consortium name="The rice annotation project (RAP)"/>
        </authorList>
    </citation>
    <scope>GENOME REANNOTATION</scope>
    <source>
        <strain>cv. Nipponbare</strain>
    </source>
</reference>
<reference key="3">
    <citation type="journal article" date="2013" name="Rice">
        <title>Improvement of the Oryza sativa Nipponbare reference genome using next generation sequence and optical map data.</title>
        <authorList>
            <person name="Kawahara Y."/>
            <person name="de la Bastide M."/>
            <person name="Hamilton J.P."/>
            <person name="Kanamori H."/>
            <person name="McCombie W.R."/>
            <person name="Ouyang S."/>
            <person name="Schwartz D.C."/>
            <person name="Tanaka T."/>
            <person name="Wu J."/>
            <person name="Zhou S."/>
            <person name="Childs K.L."/>
            <person name="Davidson R.M."/>
            <person name="Lin H."/>
            <person name="Quesada-Ocampo L."/>
            <person name="Vaillancourt B."/>
            <person name="Sakai H."/>
            <person name="Lee S.S."/>
            <person name="Kim J."/>
            <person name="Numa H."/>
            <person name="Itoh T."/>
            <person name="Buell C.R."/>
            <person name="Matsumoto T."/>
        </authorList>
    </citation>
    <scope>GENOME REANNOTATION</scope>
    <source>
        <strain>cv. Nipponbare</strain>
    </source>
</reference>
<reference key="4">
    <citation type="journal article" date="2005" name="PLoS Biol.">
        <title>The genomes of Oryza sativa: a history of duplications.</title>
        <authorList>
            <person name="Yu J."/>
            <person name="Wang J."/>
            <person name="Lin W."/>
            <person name="Li S."/>
            <person name="Li H."/>
            <person name="Zhou J."/>
            <person name="Ni P."/>
            <person name="Dong W."/>
            <person name="Hu S."/>
            <person name="Zeng C."/>
            <person name="Zhang J."/>
            <person name="Zhang Y."/>
            <person name="Li R."/>
            <person name="Xu Z."/>
            <person name="Li S."/>
            <person name="Li X."/>
            <person name="Zheng H."/>
            <person name="Cong L."/>
            <person name="Lin L."/>
            <person name="Yin J."/>
            <person name="Geng J."/>
            <person name="Li G."/>
            <person name="Shi J."/>
            <person name="Liu J."/>
            <person name="Lv H."/>
            <person name="Li J."/>
            <person name="Wang J."/>
            <person name="Deng Y."/>
            <person name="Ran L."/>
            <person name="Shi X."/>
            <person name="Wang X."/>
            <person name="Wu Q."/>
            <person name="Li C."/>
            <person name="Ren X."/>
            <person name="Wang J."/>
            <person name="Wang X."/>
            <person name="Li D."/>
            <person name="Liu D."/>
            <person name="Zhang X."/>
            <person name="Ji Z."/>
            <person name="Zhao W."/>
            <person name="Sun Y."/>
            <person name="Zhang Z."/>
            <person name="Bao J."/>
            <person name="Han Y."/>
            <person name="Dong L."/>
            <person name="Ji J."/>
            <person name="Chen P."/>
            <person name="Wu S."/>
            <person name="Liu J."/>
            <person name="Xiao Y."/>
            <person name="Bu D."/>
            <person name="Tan J."/>
            <person name="Yang L."/>
            <person name="Ye C."/>
            <person name="Zhang J."/>
            <person name="Xu J."/>
            <person name="Zhou Y."/>
            <person name="Yu Y."/>
            <person name="Zhang B."/>
            <person name="Zhuang S."/>
            <person name="Wei H."/>
            <person name="Liu B."/>
            <person name="Lei M."/>
            <person name="Yu H."/>
            <person name="Li Y."/>
            <person name="Xu H."/>
            <person name="Wei S."/>
            <person name="He X."/>
            <person name="Fang L."/>
            <person name="Zhang Z."/>
            <person name="Zhang Y."/>
            <person name="Huang X."/>
            <person name="Su Z."/>
            <person name="Tong W."/>
            <person name="Li J."/>
            <person name="Tong Z."/>
            <person name="Li S."/>
            <person name="Ye J."/>
            <person name="Wang L."/>
            <person name="Fang L."/>
            <person name="Lei T."/>
            <person name="Chen C.-S."/>
            <person name="Chen H.-C."/>
            <person name="Xu Z."/>
            <person name="Li H."/>
            <person name="Huang H."/>
            <person name="Zhang F."/>
            <person name="Xu H."/>
            <person name="Li N."/>
            <person name="Zhao C."/>
            <person name="Li S."/>
            <person name="Dong L."/>
            <person name="Huang Y."/>
            <person name="Li L."/>
            <person name="Xi Y."/>
            <person name="Qi Q."/>
            <person name="Li W."/>
            <person name="Zhang B."/>
            <person name="Hu W."/>
            <person name="Zhang Y."/>
            <person name="Tian X."/>
            <person name="Jiao Y."/>
            <person name="Liang X."/>
            <person name="Jin J."/>
            <person name="Gao L."/>
            <person name="Zheng W."/>
            <person name="Hao B."/>
            <person name="Liu S.-M."/>
            <person name="Wang W."/>
            <person name="Yuan L."/>
            <person name="Cao M."/>
            <person name="McDermott J."/>
            <person name="Samudrala R."/>
            <person name="Wang J."/>
            <person name="Wong G.K.-S."/>
            <person name="Yang H."/>
        </authorList>
    </citation>
    <scope>NUCLEOTIDE SEQUENCE [LARGE SCALE GENOMIC DNA]</scope>
    <source>
        <strain>cv. Nipponbare</strain>
    </source>
</reference>
<reference key="5">
    <citation type="journal article" date="2003" name="Science">
        <title>Collection, mapping, and annotation of over 28,000 cDNA clones from japonica rice.</title>
        <authorList>
            <consortium name="The rice full-length cDNA consortium"/>
        </authorList>
    </citation>
    <scope>NUCLEOTIDE SEQUENCE [LARGE SCALE MRNA]</scope>
    <source>
        <strain>cv. Nipponbare</strain>
    </source>
</reference>
<reference key="6">
    <citation type="journal article" date="2003" name="Plant J.">
        <title>The SCARECROW gene's role in asymmetric cell divisions in rice plants.</title>
        <authorList>
            <person name="Kamiya N."/>
            <person name="Itoh J."/>
            <person name="Morikami A."/>
            <person name="Nagato Y."/>
            <person name="Matsuoka M."/>
        </authorList>
    </citation>
    <scope>TISSUE SPECIFICITY</scope>
    <scope>DEVELOPMENTAL STAGE</scope>
    <source>
        <strain>cv. Taichung 65</strain>
    </source>
</reference>
<reference key="7">
    <citation type="journal article" date="2004" name="Plant Mol. Biol.">
        <title>Genome-wide analysis of the GRAS gene family in rice and Arabidopsis.</title>
        <authorList>
            <person name="Tian C."/>
            <person name="Wan P."/>
            <person name="Sun S."/>
            <person name="Li J."/>
            <person name="Chen M."/>
        </authorList>
    </citation>
    <scope>GENE FAMILY</scope>
</reference>
<reference key="8">
    <citation type="journal article" date="2007" name="Science">
        <title>An evolutionarily conserved mechanism delimiting SHR movement defines a single layer of endodermis in plants.</title>
        <authorList>
            <person name="Cui H."/>
            <person name="Levesque M.P."/>
            <person name="Vernoux T."/>
            <person name="Jung J.W."/>
            <person name="Paquette A.J."/>
            <person name="Gallagher K.L."/>
            <person name="Wang J.Y."/>
            <person name="Blilou I."/>
            <person name="Scheres B."/>
            <person name="Benfey P.N."/>
        </authorList>
    </citation>
    <scope>FUNCTION</scope>
    <scope>TISSUE SPECIFICITY</scope>
    <scope>INTERACTION WITH SCR1</scope>
    <source>
        <strain>cv. Nipponbare</strain>
    </source>
</reference>
<reference key="9">
    <citation type="journal article" date="2017" name="Mol. Plant">
        <title>SMALL ORGAN SIZE 1 and SMALL ORGAN SIZE 2/DWARF AND LOW-TILLERING form a complex to integrate auxin and brassinosteroid signaling in rice.</title>
        <authorList>
            <person name="Hirano K."/>
            <person name="Yoshida H."/>
            <person name="Aya K."/>
            <person name="Kawamura M."/>
            <person name="Hayashi M."/>
            <person name="Hobo T."/>
            <person name="Sato-Izawa K."/>
            <person name="Kitano H."/>
            <person name="Ueguchi-Tanaka M."/>
            <person name="Matsuoka M."/>
        </authorList>
    </citation>
    <scope>INTERACTION WITH SMOS1</scope>
</reference>
<feature type="chain" id="PRO_0000329424" description="Protein SHORT-ROOT 1">
    <location>
        <begin position="1"/>
        <end position="602"/>
    </location>
</feature>
<feature type="domain" description="GRAS" evidence="2">
    <location>
        <begin position="183"/>
        <end position="601"/>
    </location>
</feature>
<feature type="region of interest" description="Disordered" evidence="3">
    <location>
        <begin position="12"/>
        <end position="69"/>
    </location>
</feature>
<feature type="region of interest" description="Disordered" evidence="3">
    <location>
        <begin position="101"/>
        <end position="145"/>
    </location>
</feature>
<feature type="region of interest" description="Disordered" evidence="3">
    <location>
        <begin position="165"/>
        <end position="185"/>
    </location>
</feature>
<feature type="region of interest" description="Leucine repeat I (LRI)" evidence="2">
    <location>
        <begin position="190"/>
        <end position="253"/>
    </location>
</feature>
<feature type="region of interest" description="VHIID" evidence="2">
    <location>
        <begin position="272"/>
        <end position="349"/>
    </location>
</feature>
<feature type="region of interest" description="Leucine repeat II (LRII)" evidence="2">
    <location>
        <begin position="365"/>
        <end position="401"/>
    </location>
</feature>
<feature type="region of interest" description="PFYRE" evidence="2">
    <location>
        <begin position="411"/>
        <end position="517"/>
    </location>
</feature>
<feature type="region of interest" description="SAW" evidence="2">
    <location>
        <begin position="520"/>
        <end position="601"/>
    </location>
</feature>
<feature type="short sequence motif" description="VHIID" evidence="2">
    <location>
        <begin position="311"/>
        <end position="315"/>
    </location>
</feature>
<feature type="compositionally biased region" description="Low complexity" evidence="3">
    <location>
        <begin position="12"/>
        <end position="55"/>
    </location>
</feature>
<feature type="compositionally biased region" description="Gly residues" evidence="3">
    <location>
        <begin position="56"/>
        <end position="68"/>
    </location>
</feature>
<feature type="compositionally biased region" description="Low complexity" evidence="3">
    <location>
        <begin position="122"/>
        <end position="145"/>
    </location>
</feature>
<feature type="compositionally biased region" description="Gly residues" evidence="3">
    <location>
        <begin position="173"/>
        <end position="185"/>
    </location>
</feature>